<gene>
    <name evidence="1" type="primary">dxr</name>
    <name type="ordered locus">Cag_0008</name>
</gene>
<name>DXR_CHLCH</name>
<reference key="1">
    <citation type="submission" date="2005-08" db="EMBL/GenBank/DDBJ databases">
        <title>Complete sequence of Chlorobium chlorochromatii CaD3.</title>
        <authorList>
            <consortium name="US DOE Joint Genome Institute"/>
            <person name="Copeland A."/>
            <person name="Lucas S."/>
            <person name="Lapidus A."/>
            <person name="Barry K."/>
            <person name="Detter J.C."/>
            <person name="Glavina T."/>
            <person name="Hammon N."/>
            <person name="Israni S."/>
            <person name="Pitluck S."/>
            <person name="Bryant D."/>
            <person name="Schmutz J."/>
            <person name="Larimer F."/>
            <person name="Land M."/>
            <person name="Kyrpides N."/>
            <person name="Ivanova N."/>
            <person name="Richardson P."/>
        </authorList>
    </citation>
    <scope>NUCLEOTIDE SEQUENCE [LARGE SCALE GENOMIC DNA]</scope>
    <source>
        <strain>CaD3</strain>
    </source>
</reference>
<feature type="chain" id="PRO_1000020242" description="1-deoxy-D-xylulose 5-phosphate reductoisomerase">
    <location>
        <begin position="1"/>
        <end position="382"/>
    </location>
</feature>
<feature type="binding site" evidence="1">
    <location>
        <position position="10"/>
    </location>
    <ligand>
        <name>NADPH</name>
        <dbReference type="ChEBI" id="CHEBI:57783"/>
    </ligand>
</feature>
<feature type="binding site" evidence="1">
    <location>
        <position position="11"/>
    </location>
    <ligand>
        <name>NADPH</name>
        <dbReference type="ChEBI" id="CHEBI:57783"/>
    </ligand>
</feature>
<feature type="binding site" evidence="1">
    <location>
        <position position="12"/>
    </location>
    <ligand>
        <name>NADPH</name>
        <dbReference type="ChEBI" id="CHEBI:57783"/>
    </ligand>
</feature>
<feature type="binding site" evidence="1">
    <location>
        <position position="13"/>
    </location>
    <ligand>
        <name>NADPH</name>
        <dbReference type="ChEBI" id="CHEBI:57783"/>
    </ligand>
</feature>
<feature type="binding site" evidence="1">
    <location>
        <position position="36"/>
    </location>
    <ligand>
        <name>NADPH</name>
        <dbReference type="ChEBI" id="CHEBI:57783"/>
    </ligand>
</feature>
<feature type="binding site" evidence="1">
    <location>
        <position position="122"/>
    </location>
    <ligand>
        <name>NADPH</name>
        <dbReference type="ChEBI" id="CHEBI:57783"/>
    </ligand>
</feature>
<feature type="binding site" evidence="1">
    <location>
        <position position="123"/>
    </location>
    <ligand>
        <name>1-deoxy-D-xylulose 5-phosphate</name>
        <dbReference type="ChEBI" id="CHEBI:57792"/>
    </ligand>
</feature>
<feature type="binding site" evidence="1">
    <location>
        <position position="124"/>
    </location>
    <ligand>
        <name>NADPH</name>
        <dbReference type="ChEBI" id="CHEBI:57783"/>
    </ligand>
</feature>
<feature type="binding site" evidence="1">
    <location>
        <position position="148"/>
    </location>
    <ligand>
        <name>Mn(2+)</name>
        <dbReference type="ChEBI" id="CHEBI:29035"/>
    </ligand>
</feature>
<feature type="binding site" evidence="1">
    <location>
        <position position="149"/>
    </location>
    <ligand>
        <name>1-deoxy-D-xylulose 5-phosphate</name>
        <dbReference type="ChEBI" id="CHEBI:57792"/>
    </ligand>
</feature>
<feature type="binding site" evidence="1">
    <location>
        <position position="150"/>
    </location>
    <ligand>
        <name>1-deoxy-D-xylulose 5-phosphate</name>
        <dbReference type="ChEBI" id="CHEBI:57792"/>
    </ligand>
</feature>
<feature type="binding site" evidence="1">
    <location>
        <position position="150"/>
    </location>
    <ligand>
        <name>Mn(2+)</name>
        <dbReference type="ChEBI" id="CHEBI:29035"/>
    </ligand>
</feature>
<feature type="binding site" evidence="1">
    <location>
        <position position="174"/>
    </location>
    <ligand>
        <name>1-deoxy-D-xylulose 5-phosphate</name>
        <dbReference type="ChEBI" id="CHEBI:57792"/>
    </ligand>
</feature>
<feature type="binding site" evidence="1">
    <location>
        <position position="197"/>
    </location>
    <ligand>
        <name>1-deoxy-D-xylulose 5-phosphate</name>
        <dbReference type="ChEBI" id="CHEBI:57792"/>
    </ligand>
</feature>
<feature type="binding site" evidence="1">
    <location>
        <position position="203"/>
    </location>
    <ligand>
        <name>NADPH</name>
        <dbReference type="ChEBI" id="CHEBI:57783"/>
    </ligand>
</feature>
<feature type="binding site" evidence="1">
    <location>
        <position position="210"/>
    </location>
    <ligand>
        <name>1-deoxy-D-xylulose 5-phosphate</name>
        <dbReference type="ChEBI" id="CHEBI:57792"/>
    </ligand>
</feature>
<feature type="binding site" evidence="1">
    <location>
        <position position="215"/>
    </location>
    <ligand>
        <name>1-deoxy-D-xylulose 5-phosphate</name>
        <dbReference type="ChEBI" id="CHEBI:57792"/>
    </ligand>
</feature>
<feature type="binding site" evidence="1">
    <location>
        <position position="216"/>
    </location>
    <ligand>
        <name>1-deoxy-D-xylulose 5-phosphate</name>
        <dbReference type="ChEBI" id="CHEBI:57792"/>
    </ligand>
</feature>
<feature type="binding site" evidence="1">
    <location>
        <position position="219"/>
    </location>
    <ligand>
        <name>1-deoxy-D-xylulose 5-phosphate</name>
        <dbReference type="ChEBI" id="CHEBI:57792"/>
    </ligand>
</feature>
<feature type="binding site" evidence="1">
    <location>
        <position position="219"/>
    </location>
    <ligand>
        <name>Mn(2+)</name>
        <dbReference type="ChEBI" id="CHEBI:29035"/>
    </ligand>
</feature>
<comment type="function">
    <text evidence="1">Catalyzes the NADPH-dependent rearrangement and reduction of 1-deoxy-D-xylulose-5-phosphate (DXP) to 2-C-methyl-D-erythritol 4-phosphate (MEP).</text>
</comment>
<comment type="catalytic activity">
    <reaction evidence="1">
        <text>2-C-methyl-D-erythritol 4-phosphate + NADP(+) = 1-deoxy-D-xylulose 5-phosphate + NADPH + H(+)</text>
        <dbReference type="Rhea" id="RHEA:13717"/>
        <dbReference type="ChEBI" id="CHEBI:15378"/>
        <dbReference type="ChEBI" id="CHEBI:57783"/>
        <dbReference type="ChEBI" id="CHEBI:57792"/>
        <dbReference type="ChEBI" id="CHEBI:58262"/>
        <dbReference type="ChEBI" id="CHEBI:58349"/>
        <dbReference type="EC" id="1.1.1.267"/>
    </reaction>
    <physiologicalReaction direction="right-to-left" evidence="1">
        <dbReference type="Rhea" id="RHEA:13719"/>
    </physiologicalReaction>
</comment>
<comment type="cofactor">
    <cofactor evidence="1">
        <name>Mg(2+)</name>
        <dbReference type="ChEBI" id="CHEBI:18420"/>
    </cofactor>
    <cofactor evidence="1">
        <name>Mn(2+)</name>
        <dbReference type="ChEBI" id="CHEBI:29035"/>
    </cofactor>
</comment>
<comment type="pathway">
    <text evidence="1">Isoprenoid biosynthesis; isopentenyl diphosphate biosynthesis via DXP pathway; isopentenyl diphosphate from 1-deoxy-D-xylulose 5-phosphate: step 1/6.</text>
</comment>
<comment type="similarity">
    <text evidence="1">Belongs to the DXR family.</text>
</comment>
<dbReference type="EC" id="1.1.1.267" evidence="1"/>
<dbReference type="EMBL" id="CP000108">
    <property type="protein sequence ID" value="ABB27287.1"/>
    <property type="molecule type" value="Genomic_DNA"/>
</dbReference>
<dbReference type="SMR" id="Q3AUE4"/>
<dbReference type="STRING" id="340177.Cag_0008"/>
<dbReference type="KEGG" id="cch:Cag_0008"/>
<dbReference type="eggNOG" id="COG0743">
    <property type="taxonomic scope" value="Bacteria"/>
</dbReference>
<dbReference type="HOGENOM" id="CLU_035714_4_0_10"/>
<dbReference type="OrthoDB" id="9806546at2"/>
<dbReference type="UniPathway" id="UPA00056">
    <property type="reaction ID" value="UER00092"/>
</dbReference>
<dbReference type="GO" id="GO:0030604">
    <property type="term" value="F:1-deoxy-D-xylulose-5-phosphate reductoisomerase activity"/>
    <property type="evidence" value="ECO:0007669"/>
    <property type="project" value="UniProtKB-UniRule"/>
</dbReference>
<dbReference type="GO" id="GO:0030145">
    <property type="term" value="F:manganese ion binding"/>
    <property type="evidence" value="ECO:0007669"/>
    <property type="project" value="TreeGrafter"/>
</dbReference>
<dbReference type="GO" id="GO:0070402">
    <property type="term" value="F:NADPH binding"/>
    <property type="evidence" value="ECO:0007669"/>
    <property type="project" value="InterPro"/>
</dbReference>
<dbReference type="GO" id="GO:0051484">
    <property type="term" value="P:isopentenyl diphosphate biosynthetic process, methylerythritol 4-phosphate pathway involved in terpenoid biosynthetic process"/>
    <property type="evidence" value="ECO:0007669"/>
    <property type="project" value="TreeGrafter"/>
</dbReference>
<dbReference type="FunFam" id="1.10.1740.10:FF:000004">
    <property type="entry name" value="1-deoxy-D-xylulose 5-phosphate reductoisomerase"/>
    <property type="match status" value="1"/>
</dbReference>
<dbReference type="FunFam" id="3.40.50.720:FF:000045">
    <property type="entry name" value="1-deoxy-D-xylulose 5-phosphate reductoisomerase"/>
    <property type="match status" value="1"/>
</dbReference>
<dbReference type="Gene3D" id="1.10.1740.10">
    <property type="match status" value="1"/>
</dbReference>
<dbReference type="Gene3D" id="3.40.50.720">
    <property type="entry name" value="NAD(P)-binding Rossmann-like Domain"/>
    <property type="match status" value="1"/>
</dbReference>
<dbReference type="HAMAP" id="MF_00183">
    <property type="entry name" value="DXP_reductoisom"/>
    <property type="match status" value="1"/>
</dbReference>
<dbReference type="InterPro" id="IPR003821">
    <property type="entry name" value="DXP_reductoisomerase"/>
</dbReference>
<dbReference type="InterPro" id="IPR013644">
    <property type="entry name" value="DXP_reductoisomerase_C"/>
</dbReference>
<dbReference type="InterPro" id="IPR013512">
    <property type="entry name" value="DXP_reductoisomerase_N"/>
</dbReference>
<dbReference type="InterPro" id="IPR026877">
    <property type="entry name" value="DXPR_C"/>
</dbReference>
<dbReference type="InterPro" id="IPR036169">
    <property type="entry name" value="DXPR_C_sf"/>
</dbReference>
<dbReference type="InterPro" id="IPR036291">
    <property type="entry name" value="NAD(P)-bd_dom_sf"/>
</dbReference>
<dbReference type="NCBIfam" id="TIGR00243">
    <property type="entry name" value="Dxr"/>
    <property type="match status" value="1"/>
</dbReference>
<dbReference type="NCBIfam" id="NF009114">
    <property type="entry name" value="PRK12464.1"/>
    <property type="match status" value="1"/>
</dbReference>
<dbReference type="PANTHER" id="PTHR30525">
    <property type="entry name" value="1-DEOXY-D-XYLULOSE 5-PHOSPHATE REDUCTOISOMERASE"/>
    <property type="match status" value="1"/>
</dbReference>
<dbReference type="PANTHER" id="PTHR30525:SF0">
    <property type="entry name" value="1-DEOXY-D-XYLULOSE 5-PHOSPHATE REDUCTOISOMERASE, CHLOROPLASTIC"/>
    <property type="match status" value="1"/>
</dbReference>
<dbReference type="Pfam" id="PF08436">
    <property type="entry name" value="DXP_redisom_C"/>
    <property type="match status" value="1"/>
</dbReference>
<dbReference type="Pfam" id="PF02670">
    <property type="entry name" value="DXP_reductoisom"/>
    <property type="match status" value="1"/>
</dbReference>
<dbReference type="Pfam" id="PF13288">
    <property type="entry name" value="DXPR_C"/>
    <property type="match status" value="1"/>
</dbReference>
<dbReference type="PIRSF" id="PIRSF006205">
    <property type="entry name" value="Dxp_reductismrs"/>
    <property type="match status" value="1"/>
</dbReference>
<dbReference type="SUPFAM" id="SSF69055">
    <property type="entry name" value="1-deoxy-D-xylulose-5-phosphate reductoisomerase, C-terminal domain"/>
    <property type="match status" value="1"/>
</dbReference>
<dbReference type="SUPFAM" id="SSF55347">
    <property type="entry name" value="Glyceraldehyde-3-phosphate dehydrogenase-like, C-terminal domain"/>
    <property type="match status" value="1"/>
</dbReference>
<dbReference type="SUPFAM" id="SSF51735">
    <property type="entry name" value="NAD(P)-binding Rossmann-fold domains"/>
    <property type="match status" value="1"/>
</dbReference>
<accession>Q3AUE4</accession>
<organism>
    <name type="scientific">Chlorobium chlorochromatii (strain CaD3)</name>
    <dbReference type="NCBI Taxonomy" id="340177"/>
    <lineage>
        <taxon>Bacteria</taxon>
        <taxon>Pseudomonadati</taxon>
        <taxon>Chlorobiota</taxon>
        <taxon>Chlorobiia</taxon>
        <taxon>Chlorobiales</taxon>
        <taxon>Chlorobiaceae</taxon>
        <taxon>Chlorobium/Pelodictyon group</taxon>
        <taxon>Chlorobium</taxon>
    </lineage>
</organism>
<proteinExistence type="inferred from homology"/>
<protein>
    <recommendedName>
        <fullName evidence="1">1-deoxy-D-xylulose 5-phosphate reductoisomerase</fullName>
        <shortName evidence="1">DXP reductoisomerase</shortName>
        <ecNumber evidence="1">1.1.1.267</ecNumber>
    </recommendedName>
    <alternativeName>
        <fullName evidence="1">1-deoxyxylulose-5-phosphate reductoisomerase</fullName>
    </alternativeName>
    <alternativeName>
        <fullName evidence="1">2-C-methyl-D-erythritol 4-phosphate synthase</fullName>
    </alternativeName>
</protein>
<evidence type="ECO:0000255" key="1">
    <source>
        <dbReference type="HAMAP-Rule" id="MF_00183"/>
    </source>
</evidence>
<sequence>MRALSILGSTGSIGLSTLDVVRQHRDRFTIVGLAEGHDVAALAAQIEEFKPLAVSVRDAESAKKLQELLGAHKPEVYYGLDGAATIAALDGVDMVVSAIVGAAGLRPTVAAIKAGKHIALANKETLVVAGELVSRLVAEHKVHLLPVDSEHSAIFQSLAGHRAEDVERIILTASGGPFRKTSAEELKQVTLEQALKHPQWSMGAKITIDSATLMNKGLEVIEAHWLFNMPAEKIGVVVHPQSIIHSMVEYIDGCVIAQLGAPDMRAPIAYALSWPERCESGIHKLDLAKIATLTFEEPDMERFPALRLAFDALKAGGTYPAVLNAANEIAVAAFLERKIGFLDIAAMVEKTMQAHEAFTPVELEEYLQVDRWARDTAKTFLP</sequence>
<keyword id="KW-0414">Isoprene biosynthesis</keyword>
<keyword id="KW-0464">Manganese</keyword>
<keyword id="KW-0479">Metal-binding</keyword>
<keyword id="KW-0521">NADP</keyword>
<keyword id="KW-0560">Oxidoreductase</keyword>